<reference key="1">
    <citation type="journal article" date="1985" name="Gene">
        <title>Nucleotide sequence of the major early region of Bacillus subtilis phage PZA, a close relative of phi 29.</title>
        <authorList>
            <person name="Paces V."/>
            <person name="Vlcek C."/>
            <person name="Urbanek P."/>
            <person name="Hostomsky Z."/>
        </authorList>
    </citation>
    <scope>NUCLEOTIDE SEQUENCE [GENOMIC DNA]</scope>
</reference>
<proteinExistence type="inferred from homology"/>
<organismHost>
    <name type="scientific">Bacillus subtilis</name>
    <dbReference type="NCBI Taxonomy" id="1423"/>
</organismHost>
<protein>
    <recommendedName>
        <fullName evidence="1">DNA replication protein 1</fullName>
    </recommendedName>
    <alternativeName>
        <fullName>Gene product 1C</fullName>
        <shortName>gp1C</shortName>
    </alternativeName>
</protein>
<keyword id="KW-0175">Coiled coil</keyword>
<keyword id="KW-0235">DNA replication</keyword>
<keyword id="KW-0244">Early protein</keyword>
<keyword id="KW-1043">Host membrane</keyword>
<keyword id="KW-0472">Membrane</keyword>
<keyword id="KW-0694">RNA-binding</keyword>
<keyword id="KW-1194">Viral DNA replication</keyword>
<dbReference type="EMBL" id="M11813">
    <property type="protein sequence ID" value="AAA88479.1"/>
    <property type="molecule type" value="Genomic_DNA"/>
</dbReference>
<dbReference type="PIR" id="C24528">
    <property type="entry name" value="ERBP1Z"/>
</dbReference>
<dbReference type="SMR" id="P06949"/>
<dbReference type="Proteomes" id="UP000000855">
    <property type="component" value="Segment"/>
</dbReference>
<dbReference type="GO" id="GO:0033644">
    <property type="term" value="C:host cell membrane"/>
    <property type="evidence" value="ECO:0007669"/>
    <property type="project" value="UniProtKB-SubCell"/>
</dbReference>
<dbReference type="GO" id="GO:0016020">
    <property type="term" value="C:membrane"/>
    <property type="evidence" value="ECO:0007669"/>
    <property type="project" value="UniProtKB-KW"/>
</dbReference>
<dbReference type="GO" id="GO:0003723">
    <property type="term" value="F:RNA binding"/>
    <property type="evidence" value="ECO:0007669"/>
    <property type="project" value="UniProtKB-KW"/>
</dbReference>
<dbReference type="GO" id="GO:0006260">
    <property type="term" value="P:DNA replication"/>
    <property type="evidence" value="ECO:0007669"/>
    <property type="project" value="UniProtKB-KW"/>
</dbReference>
<dbReference type="GO" id="GO:0039693">
    <property type="term" value="P:viral DNA genome replication"/>
    <property type="evidence" value="ECO:0007669"/>
    <property type="project" value="UniProtKB-KW"/>
</dbReference>
<dbReference type="InterPro" id="IPR016408">
    <property type="entry name" value="Phage_phi-29_Gp1"/>
</dbReference>
<dbReference type="PIRSF" id="PIRSF004177">
    <property type="entry name" value="gp1_phi29"/>
    <property type="match status" value="1"/>
</dbReference>
<name>GP1_BPPZA</name>
<sequence length="97" mass="11159">MIKSSVGGNEGKSKFFDQEKRLERTWNNSNWGKQGIISPVDGDMKIIDIELEKKMTKLEHENKLMKNALYELSRMENNDYAAWVIKVLFGEVAHGAK</sequence>
<evidence type="ECO:0000250" key="1">
    <source>
        <dbReference type="UniProtKB" id="P03679"/>
    </source>
</evidence>
<evidence type="ECO:0000255" key="2"/>
<evidence type="ECO:0000305" key="3"/>
<gene>
    <name type="primary">1C</name>
</gene>
<organism>
    <name type="scientific">Bacillus phage PZA</name>
    <name type="common">Bacteriophage PZA</name>
    <dbReference type="NCBI Taxonomy" id="10757"/>
    <lineage>
        <taxon>Viruses</taxon>
        <taxon>Duplodnaviria</taxon>
        <taxon>Heunggongvirae</taxon>
        <taxon>Uroviricota</taxon>
        <taxon>Caudoviricetes</taxon>
        <taxon>Salasmaviridae</taxon>
        <taxon>Picovirinae</taxon>
        <taxon>Salasvirus</taxon>
        <taxon>Salasvirus PZA</taxon>
    </lineage>
</organism>
<feature type="chain" id="PRO_0000106551" description="DNA replication protein 1">
    <location>
        <begin position="1"/>
        <end position="97"/>
    </location>
</feature>
<feature type="coiled-coil region" evidence="2">
    <location>
        <begin position="49"/>
        <end position="78"/>
    </location>
</feature>
<accession>P06949</accession>
<comment type="function">
    <text evidence="1">Protein that assembles into highly ordered structures and provides a specific site for viral DNA replication. Probably anchors the viral DNA replisome to the host membrane.</text>
</comment>
<comment type="subunit">
    <text evidence="1">Homomultimer. Self-associates into large complexes forming long filamentous structures. Interacts (via N-terminus) with the primer terminal protein.</text>
</comment>
<comment type="subcellular location">
    <subcellularLocation>
        <location evidence="1">Host membrane</location>
        <topology evidence="1">Peripheral membrane protein</topology>
    </subcellularLocation>
</comment>
<comment type="domain">
    <text evidence="1">The hydrophobic C-terminus is involved in the association with the host membrane. The coiled coil region is involved assembly into protofilament sheet structures.</text>
</comment>
<comment type="similarity">
    <text evidence="3">Belongs to the phi29likevirus DNA replication protein 1 family.</text>
</comment>